<proteinExistence type="inferred from homology"/>
<name>RS12_THEP1</name>
<organism>
    <name type="scientific">Thermotoga petrophila (strain ATCC BAA-488 / DSM 13995 / JCM 10881 / RKU-1)</name>
    <dbReference type="NCBI Taxonomy" id="390874"/>
    <lineage>
        <taxon>Bacteria</taxon>
        <taxon>Thermotogati</taxon>
        <taxon>Thermotogota</taxon>
        <taxon>Thermotogae</taxon>
        <taxon>Thermotogales</taxon>
        <taxon>Thermotogaceae</taxon>
        <taxon>Thermotoga</taxon>
    </lineage>
</organism>
<sequence>MPTINQLIRYGRKPKKKKSKAPALQGNPQKRGVCIKVSTMTPKKPNSALRKIARVRLSNGIEVTAYIPGIGHNLQEHSVVLVRGGRVKDLPGVRYKIIRGALDAAGVEGRRQSRSKYGAKRPKDQKK</sequence>
<dbReference type="EMBL" id="CP000702">
    <property type="protein sequence ID" value="ABQ47301.1"/>
    <property type="molecule type" value="Genomic_DNA"/>
</dbReference>
<dbReference type="RefSeq" id="WP_004081846.1">
    <property type="nucleotide sequence ID" value="NC_009486.1"/>
</dbReference>
<dbReference type="SMR" id="A5IM78"/>
<dbReference type="STRING" id="390874.Tpet_1287"/>
<dbReference type="KEGG" id="tpt:Tpet_1287"/>
<dbReference type="eggNOG" id="COG0048">
    <property type="taxonomic scope" value="Bacteria"/>
</dbReference>
<dbReference type="HOGENOM" id="CLU_104295_1_2_0"/>
<dbReference type="Proteomes" id="UP000006558">
    <property type="component" value="Chromosome"/>
</dbReference>
<dbReference type="GO" id="GO:0015935">
    <property type="term" value="C:small ribosomal subunit"/>
    <property type="evidence" value="ECO:0007669"/>
    <property type="project" value="InterPro"/>
</dbReference>
<dbReference type="GO" id="GO:0019843">
    <property type="term" value="F:rRNA binding"/>
    <property type="evidence" value="ECO:0007669"/>
    <property type="project" value="UniProtKB-UniRule"/>
</dbReference>
<dbReference type="GO" id="GO:0003735">
    <property type="term" value="F:structural constituent of ribosome"/>
    <property type="evidence" value="ECO:0007669"/>
    <property type="project" value="InterPro"/>
</dbReference>
<dbReference type="GO" id="GO:0000049">
    <property type="term" value="F:tRNA binding"/>
    <property type="evidence" value="ECO:0007669"/>
    <property type="project" value="UniProtKB-UniRule"/>
</dbReference>
<dbReference type="GO" id="GO:0006412">
    <property type="term" value="P:translation"/>
    <property type="evidence" value="ECO:0007669"/>
    <property type="project" value="UniProtKB-UniRule"/>
</dbReference>
<dbReference type="CDD" id="cd03368">
    <property type="entry name" value="Ribosomal_S12"/>
    <property type="match status" value="1"/>
</dbReference>
<dbReference type="FunFam" id="2.40.50.140:FF:000001">
    <property type="entry name" value="30S ribosomal protein S12"/>
    <property type="match status" value="1"/>
</dbReference>
<dbReference type="Gene3D" id="2.40.50.140">
    <property type="entry name" value="Nucleic acid-binding proteins"/>
    <property type="match status" value="1"/>
</dbReference>
<dbReference type="HAMAP" id="MF_00403_B">
    <property type="entry name" value="Ribosomal_uS12_B"/>
    <property type="match status" value="1"/>
</dbReference>
<dbReference type="InterPro" id="IPR012340">
    <property type="entry name" value="NA-bd_OB-fold"/>
</dbReference>
<dbReference type="InterPro" id="IPR006032">
    <property type="entry name" value="Ribosomal_uS12"/>
</dbReference>
<dbReference type="InterPro" id="IPR005679">
    <property type="entry name" value="Ribosomal_uS12_bac"/>
</dbReference>
<dbReference type="NCBIfam" id="TIGR00981">
    <property type="entry name" value="rpsL_bact"/>
    <property type="match status" value="1"/>
</dbReference>
<dbReference type="PANTHER" id="PTHR11652">
    <property type="entry name" value="30S RIBOSOMAL PROTEIN S12 FAMILY MEMBER"/>
    <property type="match status" value="1"/>
</dbReference>
<dbReference type="Pfam" id="PF00164">
    <property type="entry name" value="Ribosom_S12_S23"/>
    <property type="match status" value="1"/>
</dbReference>
<dbReference type="PIRSF" id="PIRSF002133">
    <property type="entry name" value="Ribosomal_S12/S23"/>
    <property type="match status" value="1"/>
</dbReference>
<dbReference type="PRINTS" id="PR01034">
    <property type="entry name" value="RIBOSOMALS12"/>
</dbReference>
<dbReference type="SUPFAM" id="SSF50249">
    <property type="entry name" value="Nucleic acid-binding proteins"/>
    <property type="match status" value="1"/>
</dbReference>
<dbReference type="PROSITE" id="PS00055">
    <property type="entry name" value="RIBOSOMAL_S12"/>
    <property type="match status" value="1"/>
</dbReference>
<keyword id="KW-0488">Methylation</keyword>
<keyword id="KW-0687">Ribonucleoprotein</keyword>
<keyword id="KW-0689">Ribosomal protein</keyword>
<keyword id="KW-0694">RNA-binding</keyword>
<keyword id="KW-0699">rRNA-binding</keyword>
<keyword id="KW-0820">tRNA-binding</keyword>
<comment type="function">
    <text evidence="2">With S4 and S5 plays an important role in translational accuracy.</text>
</comment>
<comment type="function">
    <text evidence="2">Interacts with and stabilizes bases of the 16S rRNA that are involved in tRNA selection in the A site and with the mRNA backbone. Located at the interface of the 30S and 50S subunits, it traverses the body of the 30S subunit contacting proteins on the other side and probably holding the rRNA structure together. The combined cluster of proteins S8, S12 and S17 appears to hold together the shoulder and platform of the 30S subunit.</text>
</comment>
<comment type="subunit">
    <text evidence="2">Part of the 30S ribosomal subunit. Contacts proteins S8 and S17. May interact with IF1 in the 30S initiation complex.</text>
</comment>
<comment type="similarity">
    <text evidence="2">Belongs to the universal ribosomal protein uS12 family.</text>
</comment>
<accession>A5IM78</accession>
<protein>
    <recommendedName>
        <fullName evidence="2">Small ribosomal subunit protein uS12</fullName>
    </recommendedName>
    <alternativeName>
        <fullName evidence="4">30S ribosomal protein S12</fullName>
    </alternativeName>
</protein>
<gene>
    <name evidence="2" type="primary">rpsL</name>
    <name type="ordered locus">Tpet_1287</name>
</gene>
<reference key="1">
    <citation type="submission" date="2007-05" db="EMBL/GenBank/DDBJ databases">
        <title>Complete sequence of Thermotoga petrophila RKU-1.</title>
        <authorList>
            <consortium name="US DOE Joint Genome Institute"/>
            <person name="Copeland A."/>
            <person name="Lucas S."/>
            <person name="Lapidus A."/>
            <person name="Barry K."/>
            <person name="Glavina del Rio T."/>
            <person name="Dalin E."/>
            <person name="Tice H."/>
            <person name="Pitluck S."/>
            <person name="Sims D."/>
            <person name="Brettin T."/>
            <person name="Bruce D."/>
            <person name="Detter J.C."/>
            <person name="Han C."/>
            <person name="Tapia R."/>
            <person name="Schmutz J."/>
            <person name="Larimer F."/>
            <person name="Land M."/>
            <person name="Hauser L."/>
            <person name="Kyrpides N."/>
            <person name="Mikhailova N."/>
            <person name="Nelson K."/>
            <person name="Gogarten J.P."/>
            <person name="Noll K."/>
            <person name="Richardson P."/>
        </authorList>
    </citation>
    <scope>NUCLEOTIDE SEQUENCE [LARGE SCALE GENOMIC DNA]</scope>
    <source>
        <strain>ATCC BAA-488 / DSM 13995 / JCM 10881 / RKU-1</strain>
    </source>
</reference>
<evidence type="ECO:0000250" key="1"/>
<evidence type="ECO:0000255" key="2">
    <source>
        <dbReference type="HAMAP-Rule" id="MF_00403"/>
    </source>
</evidence>
<evidence type="ECO:0000256" key="3">
    <source>
        <dbReference type="SAM" id="MobiDB-lite"/>
    </source>
</evidence>
<evidence type="ECO:0000305" key="4"/>
<feature type="chain" id="PRO_1000049818" description="Small ribosomal subunit protein uS12">
    <location>
        <begin position="1"/>
        <end position="127"/>
    </location>
</feature>
<feature type="region of interest" description="Disordered" evidence="3">
    <location>
        <begin position="11"/>
        <end position="30"/>
    </location>
</feature>
<feature type="region of interest" description="Disordered" evidence="3">
    <location>
        <begin position="105"/>
        <end position="127"/>
    </location>
</feature>
<feature type="compositionally biased region" description="Basic residues" evidence="3">
    <location>
        <begin position="11"/>
        <end position="20"/>
    </location>
</feature>
<feature type="compositionally biased region" description="Basic residues" evidence="3">
    <location>
        <begin position="112"/>
        <end position="127"/>
    </location>
</feature>
<feature type="modified residue" description="3-methylthioaspartic acid" evidence="1">
    <location>
        <position position="89"/>
    </location>
</feature>